<evidence type="ECO:0000250" key="1"/>
<evidence type="ECO:0000255" key="2"/>
<evidence type="ECO:0000256" key="3">
    <source>
        <dbReference type="SAM" id="MobiDB-lite"/>
    </source>
</evidence>
<evidence type="ECO:0000305" key="4"/>
<accession>B7FA90</accession>
<accession>A0A0N7KMJ1</accession>
<accession>Q0DAE9</accession>
<accession>Q67U28</accession>
<reference key="1">
    <citation type="journal article" date="2005" name="Nature">
        <title>The map-based sequence of the rice genome.</title>
        <authorList>
            <consortium name="International rice genome sequencing project (IRGSP)"/>
        </authorList>
    </citation>
    <scope>NUCLEOTIDE SEQUENCE [LARGE SCALE GENOMIC DNA]</scope>
    <source>
        <strain>cv. Nipponbare</strain>
    </source>
</reference>
<reference key="2">
    <citation type="journal article" date="2008" name="Nucleic Acids Res.">
        <title>The rice annotation project database (RAP-DB): 2008 update.</title>
        <authorList>
            <consortium name="The rice annotation project (RAP)"/>
        </authorList>
    </citation>
    <scope>GENOME REANNOTATION</scope>
    <source>
        <strain>cv. Nipponbare</strain>
    </source>
</reference>
<reference key="3">
    <citation type="journal article" date="2013" name="Rice">
        <title>Improvement of the Oryza sativa Nipponbare reference genome using next generation sequence and optical map data.</title>
        <authorList>
            <person name="Kawahara Y."/>
            <person name="de la Bastide M."/>
            <person name="Hamilton J.P."/>
            <person name="Kanamori H."/>
            <person name="McCombie W.R."/>
            <person name="Ouyang S."/>
            <person name="Schwartz D.C."/>
            <person name="Tanaka T."/>
            <person name="Wu J."/>
            <person name="Zhou S."/>
            <person name="Childs K.L."/>
            <person name="Davidson R.M."/>
            <person name="Lin H."/>
            <person name="Quesada-Ocampo L."/>
            <person name="Vaillancourt B."/>
            <person name="Sakai H."/>
            <person name="Lee S.S."/>
            <person name="Kim J."/>
            <person name="Numa H."/>
            <person name="Itoh T."/>
            <person name="Buell C.R."/>
            <person name="Matsumoto T."/>
        </authorList>
    </citation>
    <scope>GENOME REANNOTATION</scope>
    <source>
        <strain>cv. Nipponbare</strain>
    </source>
</reference>
<reference key="4">
    <citation type="submission" date="2006-10" db="EMBL/GenBank/DDBJ databases">
        <title>Oryza sativa full length cDNA.</title>
        <authorList>
            <consortium name="The rice full-length cDNA consortium"/>
        </authorList>
    </citation>
    <scope>NUCLEOTIDE SEQUENCE [LARGE SCALE MRNA]</scope>
    <source>
        <strain>cv. Nipponbare</strain>
    </source>
</reference>
<reference key="5">
    <citation type="journal article" date="2006" name="Planta">
        <title>Identification and characterization of an Arabidopsis homogentisate phytyltransferase paralog.</title>
        <authorList>
            <person name="Venkatesh T.V."/>
            <person name="Karunanandaa B."/>
            <person name="Free D.L."/>
            <person name="Rottnek J.M."/>
            <person name="Baszis S.R."/>
            <person name="Valentin H.E."/>
        </authorList>
    </citation>
    <scope>NOMENCLATURE</scope>
</reference>
<comment type="function">
    <text evidence="1">Involved in the synthesis of tocopherol (vitamin E). Catalyzes the condensation of homogentisate and phytyl diphosphate to form dimethylphytylhydroquinone (By similarity).</text>
</comment>
<comment type="catalytic activity">
    <reaction>
        <text>phytyl diphosphate + homogentisate + H(+) = 2-methyl-6-phytyl-1,4-benzene-1,4-diol + CO2 + diphosphate</text>
        <dbReference type="Rhea" id="RHEA:37975"/>
        <dbReference type="ChEBI" id="CHEBI:15378"/>
        <dbReference type="ChEBI" id="CHEBI:16169"/>
        <dbReference type="ChEBI" id="CHEBI:16526"/>
        <dbReference type="ChEBI" id="CHEBI:33019"/>
        <dbReference type="ChEBI" id="CHEBI:75434"/>
        <dbReference type="ChEBI" id="CHEBI:75920"/>
        <dbReference type="EC" id="2.5.1.115"/>
    </reaction>
</comment>
<comment type="pathway">
    <text>Cofactor biosynthesis; tocopherol biosynthesis.</text>
</comment>
<comment type="subcellular location">
    <subcellularLocation>
        <location evidence="4">Plastid</location>
        <location evidence="4">Chloroplast thylakoid membrane</location>
        <topology evidence="4">Multi-pass membrane protein</topology>
    </subcellularLocation>
</comment>
<comment type="similarity">
    <text evidence="4">Belongs to the UbiA prenyltransferase family.</text>
</comment>
<comment type="sequence caution" evidence="4">
    <conflict type="erroneous gene model prediction">
        <sequence resource="EMBL-CDS" id="BAD37835"/>
    </conflict>
</comment>
<comment type="sequence caution" evidence="4">
    <conflict type="erroneous gene model prediction">
        <sequence resource="EMBL-CDS" id="BAD38343"/>
    </conflict>
</comment>
<comment type="sequence caution" evidence="4">
    <conflict type="erroneous gene model prediction">
        <sequence resource="EMBL-CDS" id="BAF20174"/>
    </conflict>
</comment>
<dbReference type="EC" id="2.5.1.115"/>
<dbReference type="EMBL" id="AP004803">
    <property type="protein sequence ID" value="BAD37835.1"/>
    <property type="status" value="ALT_SEQ"/>
    <property type="molecule type" value="Genomic_DNA"/>
</dbReference>
<dbReference type="EMBL" id="AP005760">
    <property type="protein sequence ID" value="BAD38343.1"/>
    <property type="status" value="ALT_SEQ"/>
    <property type="molecule type" value="Genomic_DNA"/>
</dbReference>
<dbReference type="EMBL" id="AP008212">
    <property type="protein sequence ID" value="BAF20174.2"/>
    <property type="status" value="ALT_SEQ"/>
    <property type="molecule type" value="Genomic_DNA"/>
</dbReference>
<dbReference type="EMBL" id="AP014962">
    <property type="protein sequence ID" value="BAS98961.1"/>
    <property type="molecule type" value="Genomic_DNA"/>
</dbReference>
<dbReference type="EMBL" id="AK243323">
    <property type="protein sequence ID" value="BAH01538.1"/>
    <property type="molecule type" value="mRNA"/>
</dbReference>
<dbReference type="RefSeq" id="XP_015644510.1">
    <property type="nucleotide sequence ID" value="XM_015789024.1"/>
</dbReference>
<dbReference type="RefSeq" id="XP_015644511.1">
    <property type="nucleotide sequence ID" value="XM_015789025.1"/>
</dbReference>
<dbReference type="SMR" id="B7FA90"/>
<dbReference type="FunCoup" id="B7FA90">
    <property type="interactions" value="290"/>
</dbReference>
<dbReference type="STRING" id="39947.B7FA90"/>
<dbReference type="PaxDb" id="39947-B7FA90"/>
<dbReference type="EnsemblPlants" id="Os06t0658900-01">
    <property type="protein sequence ID" value="Os06t0658900-01"/>
    <property type="gene ID" value="Os06g0658900"/>
</dbReference>
<dbReference type="GeneID" id="4341727"/>
<dbReference type="Gramene" id="Os06t0658900-01">
    <property type="protein sequence ID" value="Os06t0658900-01"/>
    <property type="gene ID" value="Os06g0658900"/>
</dbReference>
<dbReference type="KEGG" id="dosa:Os06g0658900"/>
<dbReference type="KEGG" id="osa:4341727"/>
<dbReference type="eggNOG" id="ENOG502R0I3">
    <property type="taxonomic scope" value="Eukaryota"/>
</dbReference>
<dbReference type="HOGENOM" id="CLU_048963_0_0_1"/>
<dbReference type="InParanoid" id="B7FA90"/>
<dbReference type="OMA" id="FYQFIWK"/>
<dbReference type="OrthoDB" id="1502398at2759"/>
<dbReference type="PlantReactome" id="R-OSA-1119287">
    <property type="pathway name" value="Vitamin E biosynthesis"/>
</dbReference>
<dbReference type="UniPathway" id="UPA00160"/>
<dbReference type="Proteomes" id="UP000000763">
    <property type="component" value="Chromosome 6"/>
</dbReference>
<dbReference type="Proteomes" id="UP000059680">
    <property type="component" value="Chromosome 6"/>
</dbReference>
<dbReference type="GO" id="GO:0009535">
    <property type="term" value="C:chloroplast thylakoid membrane"/>
    <property type="evidence" value="ECO:0007669"/>
    <property type="project" value="UniProtKB-SubCell"/>
</dbReference>
<dbReference type="GO" id="GO:0010176">
    <property type="term" value="F:homogentisate phytyltransferase activity"/>
    <property type="evidence" value="ECO:0007669"/>
    <property type="project" value="UniProtKB-EC"/>
</dbReference>
<dbReference type="GO" id="GO:0010189">
    <property type="term" value="P:vitamin E biosynthetic process"/>
    <property type="evidence" value="ECO:0007669"/>
    <property type="project" value="UniProtKB-UniPathway"/>
</dbReference>
<dbReference type="CDD" id="cd13960">
    <property type="entry name" value="PT_UbiA_HPT1"/>
    <property type="match status" value="1"/>
</dbReference>
<dbReference type="FunFam" id="1.10.357.140:FF:000011">
    <property type="entry name" value="Homogentisate phytyltransferase 1"/>
    <property type="match status" value="1"/>
</dbReference>
<dbReference type="Gene3D" id="1.10.357.140">
    <property type="entry name" value="UbiA prenyltransferase"/>
    <property type="match status" value="1"/>
</dbReference>
<dbReference type="Gene3D" id="1.20.120.1780">
    <property type="entry name" value="UbiA prenyltransferase"/>
    <property type="match status" value="1"/>
</dbReference>
<dbReference type="InterPro" id="IPR044502">
    <property type="entry name" value="AtHST-like"/>
</dbReference>
<dbReference type="InterPro" id="IPR000537">
    <property type="entry name" value="UbiA_prenyltransferase"/>
</dbReference>
<dbReference type="InterPro" id="IPR044878">
    <property type="entry name" value="UbiA_sf"/>
</dbReference>
<dbReference type="NCBIfam" id="NF009525">
    <property type="entry name" value="PRK12887.1"/>
    <property type="match status" value="1"/>
</dbReference>
<dbReference type="PANTHER" id="PTHR43009:SF6">
    <property type="entry name" value="HOMOGENTISATE PHYTYLTRANSFERASE 1, CHLOROPLASTIC"/>
    <property type="match status" value="1"/>
</dbReference>
<dbReference type="PANTHER" id="PTHR43009">
    <property type="entry name" value="HOMOGENTISATE SOLANESYLTRANSFERASE, CHLOROPLASTIC"/>
    <property type="match status" value="1"/>
</dbReference>
<dbReference type="Pfam" id="PF01040">
    <property type="entry name" value="UbiA"/>
    <property type="match status" value="1"/>
</dbReference>
<keyword id="KW-0150">Chloroplast</keyword>
<keyword id="KW-0472">Membrane</keyword>
<keyword id="KW-0934">Plastid</keyword>
<keyword id="KW-1185">Reference proteome</keyword>
<keyword id="KW-0793">Thylakoid</keyword>
<keyword id="KW-0808">Transferase</keyword>
<keyword id="KW-0809">Transit peptide</keyword>
<keyword id="KW-0812">Transmembrane</keyword>
<keyword id="KW-1133">Transmembrane helix</keyword>
<gene>
    <name type="primary">HPT1</name>
    <name type="synonym">VTE2-1</name>
    <name type="ordered locus">Os06g0658900</name>
    <name type="ordered locus">LOC_Os06g44840</name>
    <name type="ORF">B1047G05.17</name>
    <name type="ORF">P0677B10.32</name>
</gene>
<protein>
    <recommendedName>
        <fullName>Probable homogentisate phytyltransferase 1, chloroplastic</fullName>
        <ecNumber>2.5.1.115</ecNumber>
    </recommendedName>
    <alternativeName>
        <fullName>Vitamin E pathway gene 2-1 protein</fullName>
        <shortName>OsVTE2-1</shortName>
    </alternativeName>
</protein>
<name>HPT1_ORYSJ</name>
<feature type="transit peptide" description="Chloroplast" evidence="2">
    <location>
        <begin position="1"/>
        <end position="77"/>
    </location>
</feature>
<feature type="chain" id="PRO_0000409870" description="Probable homogentisate phytyltransferase 1, chloroplastic">
    <location>
        <begin position="78"/>
        <end position="404"/>
    </location>
</feature>
<feature type="transmembrane region" description="Helical" evidence="2">
    <location>
        <begin position="119"/>
        <end position="139"/>
    </location>
</feature>
<feature type="transmembrane region" description="Helical" evidence="2">
    <location>
        <begin position="144"/>
        <end position="164"/>
    </location>
</feature>
<feature type="transmembrane region" description="Helical" evidence="2">
    <location>
        <begin position="184"/>
        <end position="204"/>
    </location>
</feature>
<feature type="transmembrane region" description="Helical" evidence="2">
    <location>
        <begin position="216"/>
        <end position="238"/>
    </location>
</feature>
<feature type="transmembrane region" description="Helical" evidence="2">
    <location>
        <begin position="245"/>
        <end position="265"/>
    </location>
</feature>
<feature type="transmembrane region" description="Helical" evidence="2">
    <location>
        <begin position="282"/>
        <end position="302"/>
    </location>
</feature>
<feature type="transmembrane region" description="Helical" evidence="2">
    <location>
        <begin position="325"/>
        <end position="345"/>
    </location>
</feature>
<feature type="transmembrane region" description="Helical" evidence="2">
    <location>
        <begin position="348"/>
        <end position="368"/>
    </location>
</feature>
<feature type="transmembrane region" description="Helical" evidence="2">
    <location>
        <begin position="382"/>
        <end position="402"/>
    </location>
</feature>
<feature type="region of interest" description="Disordered" evidence="3">
    <location>
        <begin position="68"/>
        <end position="96"/>
    </location>
</feature>
<feature type="compositionally biased region" description="Polar residues" evidence="3">
    <location>
        <begin position="76"/>
        <end position="92"/>
    </location>
</feature>
<sequence>MDSLRLRPSLLAARAPGAASLPPLRRDHFLPPLCSIHRNGKRPVSLSSQRTQGPSFDQCQKFFGWKSSHHRIPHRPTSSSADASGQPLQSSAEAHDSSSIWKPISSSLDAFYRFSRPHTVIGTALSIVSVSLLAVENLSDVSPLFLTGLLEAVVAALFMNIYIVGLNQLFDIEIDKVNKPTLPLASGEYSPATGVALVSAFAAMSFGLGWAVGSQPLFLALFISFILGTAYSINLPFLRWKRSAVVAALCILAVRAVIVQLAFFLHIQTFVFRRPAVFTRPLIFATAFMTFFSVVIALFKDIPDIEGDRIFGIKSFSVRLGQKKVFWICVGLLEMAYCVAILMGATSACLWSKYATVVGHAILAAILWNRSRSIDLTSKTAITSFYMFIWKLFYAEYLLIPLVR</sequence>
<proteinExistence type="evidence at transcript level"/>
<organism>
    <name type="scientific">Oryza sativa subsp. japonica</name>
    <name type="common">Rice</name>
    <dbReference type="NCBI Taxonomy" id="39947"/>
    <lineage>
        <taxon>Eukaryota</taxon>
        <taxon>Viridiplantae</taxon>
        <taxon>Streptophyta</taxon>
        <taxon>Embryophyta</taxon>
        <taxon>Tracheophyta</taxon>
        <taxon>Spermatophyta</taxon>
        <taxon>Magnoliopsida</taxon>
        <taxon>Liliopsida</taxon>
        <taxon>Poales</taxon>
        <taxon>Poaceae</taxon>
        <taxon>BOP clade</taxon>
        <taxon>Oryzoideae</taxon>
        <taxon>Oryzeae</taxon>
        <taxon>Oryzinae</taxon>
        <taxon>Oryza</taxon>
        <taxon>Oryza sativa</taxon>
    </lineage>
</organism>